<feature type="chain" id="PRO_0000431947" description="Probable tape measure protein">
    <location>
        <begin position="1"/>
        <end position="846"/>
    </location>
</feature>
<feature type="coiled-coil region" evidence="2">
    <location>
        <begin position="59"/>
        <end position="82"/>
    </location>
</feature>
<proteinExistence type="inferred from homology"/>
<dbReference type="EMBL" id="AY539836">
    <property type="protein sequence ID" value="AAS47883.1"/>
    <property type="molecule type" value="Genomic_DNA"/>
</dbReference>
<dbReference type="RefSeq" id="YP_024717.1">
    <property type="nucleotide sequence ID" value="NC_005882.1"/>
</dbReference>
<dbReference type="SMR" id="Q6QIA5"/>
<dbReference type="GeneID" id="2845946"/>
<dbReference type="KEGG" id="vg:2845946"/>
<dbReference type="Proteomes" id="UP000011237">
    <property type="component" value="Segment"/>
</dbReference>
<dbReference type="GO" id="GO:0098003">
    <property type="term" value="P:viral tail assembly"/>
    <property type="evidence" value="ECO:0007669"/>
    <property type="project" value="UniProtKB-KW"/>
</dbReference>
<dbReference type="InterPro" id="IPR010090">
    <property type="entry name" value="Phage_tape_meas"/>
</dbReference>
<dbReference type="NCBIfam" id="TIGR01760">
    <property type="entry name" value="tape_meas_TP901"/>
    <property type="match status" value="1"/>
</dbReference>
<dbReference type="PANTHER" id="PTHR37813">
    <property type="entry name" value="FELS-2 PROPHAGE PROTEIN"/>
    <property type="match status" value="1"/>
</dbReference>
<dbReference type="PANTHER" id="PTHR37813:SF1">
    <property type="entry name" value="FELS-2 PROPHAGE PROTEIN"/>
    <property type="match status" value="1"/>
</dbReference>
<dbReference type="Pfam" id="PF10145">
    <property type="entry name" value="PhageMin_Tail"/>
    <property type="match status" value="1"/>
</dbReference>
<reference key="1">
    <citation type="journal article" date="2004" name="J. Mol. Biol.">
        <title>Burkholderia cenocepacia phage BcepMu and a family of Mu-like phages encoding potential pathogenesis factors.</title>
        <authorList>
            <person name="Summer E.J."/>
            <person name="Gonzalez C.F."/>
            <person name="Carlisle T."/>
            <person name="Mebane L.M."/>
            <person name="Cass A.M."/>
            <person name="Savva C.G."/>
            <person name="LiPuma J."/>
            <person name="Young R."/>
        </authorList>
    </citation>
    <scope>NUCLEOTIDE SEQUENCE [GENOMIC DNA]</scope>
    <source>
        <strain evidence="5">Isolate -/United States/Summer/2002</strain>
    </source>
</reference>
<keyword id="KW-0175">Coiled coil</keyword>
<keyword id="KW-1185">Reference proteome</keyword>
<keyword id="KW-1188">Viral release from host cell</keyword>
<keyword id="KW-1245">Viral tail assembly</keyword>
<organism>
    <name type="scientific">Burkholderia phage BcepMu (isolate -/United States/Summer/2002)</name>
    <name type="common">Bacteriophage BcepMu</name>
    <dbReference type="NCBI Taxonomy" id="1283335"/>
    <lineage>
        <taxon>Viruses</taxon>
        <taxon>Duplodnaviria</taxon>
        <taxon>Heunggongvirae</taxon>
        <taxon>Uroviricota</taxon>
        <taxon>Caudoviricetes</taxon>
        <taxon>Bcepmuvirus</taxon>
        <taxon>Bcepmuvirus bcepMu</taxon>
    </lineage>
</organism>
<evidence type="ECO:0000250" key="1">
    <source>
        <dbReference type="UniProtKB" id="O64314"/>
    </source>
</evidence>
<evidence type="ECO:0000255" key="2"/>
<evidence type="ECO:0000305" key="3"/>
<evidence type="ECO:0000312" key="4">
    <source>
        <dbReference type="EMBL" id="AAS47883.1"/>
    </source>
</evidence>
<evidence type="ECO:0000312" key="5">
    <source>
        <dbReference type="Proteomes" id="UP000011237"/>
    </source>
</evidence>
<organismHost>
    <name type="scientific">Burkholderia cenocepacia (strain ATCC BAA-245 / DSM 16553 / LMG 16656 / NCTC 13227 / J2315 / CF5610)</name>
    <name type="common">Burkholderia cepacia (strain J2315)</name>
    <dbReference type="NCBI Taxonomy" id="216591"/>
</organismHost>
<accession>Q6QIA5</accession>
<gene>
    <name evidence="4" type="ORF">BcepMu44</name>
</gene>
<protein>
    <recommendedName>
        <fullName evidence="1">Probable tape measure protein</fullName>
        <shortName>TMP</shortName>
    </recommendedName>
    <alternativeName>
        <fullName evidence="4">Gene product 44</fullName>
        <shortName>gp44</shortName>
    </alternativeName>
</protein>
<sequence>MASEFYIGVKIGATLLGSFGAALSGTRTTLNGLGRVADELRARHTRLGDAMARAVAHPMRNIAELRGQYDRLGRTIDQVQAKQAALATRLARGAALREQRQGLGADMLGTYATAAATAAPVIGAVRQAATFEAGLRDIAITGNLTRDEEFRIGETMRRAALATSQGHNSILEGVGTLVAAGMDAKEAGQKSNLLGRVATATNADMKDLAGMVYSFSETLGIKGDAALKEAFNRAAYGGKLGRFELKDMAKALPEMTAAFAAKGIKGQDALTQIIASLEVGREGAGSGDEAVTNLRNWLSHMNAKATIDAYKKAGVDYQKSMSNLVAGGYSSYEGSLQIAQKFIASRGDAFMKQWKAAGAKGDEEAQRKLMESFGLNEVFQDIQTINHLLAMRQGWDKYQQNKKDMGSAQALNTIDQDYVRRAELATVAWGRFQTQIADLGITVGRALLPSLTDLMNTVTPLIQRTAQFAAAHPGLIRGVVGFATAVIGMKVATLAAGWGLNFFVKSPLNMVSTALTTVGAKWTLFRALWAGGGSRLSTVFQIFGMGAGAAGKFAAVIGRAGSLFMGFGRGALVVGRALLPFGQGMLMTFIGPLRLLAQGGMLLARVLGGQLVNGLMLAGRAVLWLGRALMLNPIGIAITAIAVGAYLIYRYWTPIKQFFGGIWASIRTAFAGVLGWFGVGLPKTFTDFGSHLIDGLVNGIRNRFTAAKNTLIEFGSNVKAWFANTLGIKSPSRVFMGFGDNIAQGAAIGIGRSSAVAARAAAGMATQAAAAASLQRINAARGGSPAGASVAGSGITVHFSPTITVQGGSPDGVKDQVKQGLNLSLRDLERMLDDLLAKRERRAYRS</sequence>
<name>TMP_BPBMU</name>
<comment type="function">
    <text evidence="1">Serves as a base for tail tube protein polymerization and acts as a template for tail length determination.</text>
</comment>
<comment type="similarity">
    <text evidence="3">Belongs to the P2likevirus tape measure protein family.</text>
</comment>